<organism>
    <name type="scientific">Lithobates pipiens</name>
    <name type="common">Northern leopard frog</name>
    <name type="synonym">Rana pipiens</name>
    <dbReference type="NCBI Taxonomy" id="8404"/>
    <lineage>
        <taxon>Eukaryota</taxon>
        <taxon>Metazoa</taxon>
        <taxon>Chordata</taxon>
        <taxon>Craniata</taxon>
        <taxon>Vertebrata</taxon>
        <taxon>Euteleostomi</taxon>
        <taxon>Amphibia</taxon>
        <taxon>Batrachia</taxon>
        <taxon>Anura</taxon>
        <taxon>Neobatrachia</taxon>
        <taxon>Ranoidea</taxon>
        <taxon>Ranidae</taxon>
        <taxon>Lithobates</taxon>
    </lineage>
</organism>
<comment type="function">
    <text evidence="2">Antibacterial activity against Gram-positive bacterium S.aureus and Gram-negative bacterium E.coli. Has activity against C.albicans.</text>
</comment>
<comment type="subcellular location">
    <subcellularLocation>
        <location>Secreted</location>
    </subcellularLocation>
</comment>
<comment type="tissue specificity">
    <text>Expressed by the skin glands.</text>
</comment>
<comment type="mass spectrometry" mass="2568.6" method="Electrospray" evidence="2"/>
<comment type="similarity">
    <text evidence="3">Belongs to the frog skin active peptide (FSAP) family. Brevinin subfamily.</text>
</comment>
<sequence length="24" mass="2571">FLPIIASVAANVFSKIFCAISKKC</sequence>
<proteinExistence type="evidence at protein level"/>
<feature type="peptide" id="PRO_0000043544" description="Brevinin-1Pd">
    <location>
        <begin position="1"/>
        <end position="24"/>
    </location>
</feature>
<feature type="disulfide bond" evidence="1">
    <location>
        <begin position="18"/>
        <end position="24"/>
    </location>
</feature>
<evidence type="ECO:0000250" key="1"/>
<evidence type="ECO:0000269" key="2">
    <source>
    </source>
</evidence>
<evidence type="ECO:0000305" key="3"/>
<protein>
    <recommendedName>
        <fullName>Brevinin-1Pd</fullName>
    </recommendedName>
</protein>
<dbReference type="GO" id="GO:0005576">
    <property type="term" value="C:extracellular region"/>
    <property type="evidence" value="ECO:0007669"/>
    <property type="project" value="UniProtKB-SubCell"/>
</dbReference>
<dbReference type="GO" id="GO:0042742">
    <property type="term" value="P:defense response to bacterium"/>
    <property type="evidence" value="ECO:0007669"/>
    <property type="project" value="UniProtKB-KW"/>
</dbReference>
<dbReference type="GO" id="GO:0050832">
    <property type="term" value="P:defense response to fungus"/>
    <property type="evidence" value="ECO:0007669"/>
    <property type="project" value="UniProtKB-KW"/>
</dbReference>
<dbReference type="GO" id="GO:0031640">
    <property type="term" value="P:killing of cells of another organism"/>
    <property type="evidence" value="ECO:0007669"/>
    <property type="project" value="UniProtKB-KW"/>
</dbReference>
<dbReference type="InterPro" id="IPR012520">
    <property type="entry name" value="Antimicrobial_frog_1"/>
</dbReference>
<dbReference type="Pfam" id="PF08018">
    <property type="entry name" value="Antimicrobial_1"/>
    <property type="match status" value="1"/>
</dbReference>
<accession>P82844</accession>
<keyword id="KW-0878">Amphibian defense peptide</keyword>
<keyword id="KW-0044">Antibiotic</keyword>
<keyword id="KW-0929">Antimicrobial</keyword>
<keyword id="KW-0903">Direct protein sequencing</keyword>
<keyword id="KW-1015">Disulfide bond</keyword>
<keyword id="KW-0295">Fungicide</keyword>
<keyword id="KW-0964">Secreted</keyword>
<name>BR1D_LITPI</name>
<reference key="1">
    <citation type="journal article" date="2000" name="Eur. J. Biochem.">
        <title>Peptides with antimicrobial activity from four different families isolated from the skins of the North American frogs Rana luteiventris, Rana berlandieri and Rana pipiens.</title>
        <authorList>
            <person name="Goraya J."/>
            <person name="Wang Y."/>
            <person name="Li Z."/>
            <person name="O'Flaherty M."/>
            <person name="Knoop F.C."/>
            <person name="Platz J.E."/>
            <person name="Conlon J.M."/>
        </authorList>
    </citation>
    <scope>PROTEIN SEQUENCE</scope>
    <scope>FUNCTION</scope>
    <scope>MASS SPECTROMETRY</scope>
    <source>
        <tissue>Skin secretion</tissue>
    </source>
</reference>